<protein>
    <recommendedName>
        <fullName evidence="1">Potassium-transporting ATPase KdpC subunit</fullName>
    </recommendedName>
    <alternativeName>
        <fullName evidence="1">ATP phosphohydrolase [potassium-transporting] C chain</fullName>
    </alternativeName>
    <alternativeName>
        <fullName evidence="1">Potassium-binding and translocating subunit C</fullName>
    </alternativeName>
    <alternativeName>
        <fullName evidence="1">Potassium-translocating ATPase C chain</fullName>
    </alternativeName>
</protein>
<accession>Q3IYD8</accession>
<proteinExistence type="inferred from homology"/>
<keyword id="KW-0067">ATP-binding</keyword>
<keyword id="KW-0997">Cell inner membrane</keyword>
<keyword id="KW-1003">Cell membrane</keyword>
<keyword id="KW-0406">Ion transport</keyword>
<keyword id="KW-0472">Membrane</keyword>
<keyword id="KW-0547">Nucleotide-binding</keyword>
<keyword id="KW-0630">Potassium</keyword>
<keyword id="KW-0633">Potassium transport</keyword>
<keyword id="KW-1185">Reference proteome</keyword>
<keyword id="KW-0812">Transmembrane</keyword>
<keyword id="KW-1133">Transmembrane helix</keyword>
<keyword id="KW-0813">Transport</keyword>
<dbReference type="EMBL" id="CP000143">
    <property type="protein sequence ID" value="ABA80446.1"/>
    <property type="molecule type" value="Genomic_DNA"/>
</dbReference>
<dbReference type="RefSeq" id="WP_011338832.1">
    <property type="nucleotide sequence ID" value="NC_007493.2"/>
</dbReference>
<dbReference type="RefSeq" id="YP_354347.1">
    <property type="nucleotide sequence ID" value="NC_007493.2"/>
</dbReference>
<dbReference type="SMR" id="Q3IYD8"/>
<dbReference type="STRING" id="272943.RSP_1267"/>
<dbReference type="EnsemblBacteria" id="ABA80446">
    <property type="protein sequence ID" value="ABA80446"/>
    <property type="gene ID" value="RSP_1267"/>
</dbReference>
<dbReference type="GeneID" id="3718470"/>
<dbReference type="KEGG" id="rsp:RSP_1267"/>
<dbReference type="PATRIC" id="fig|272943.9.peg.3247"/>
<dbReference type="eggNOG" id="COG2156">
    <property type="taxonomic scope" value="Bacteria"/>
</dbReference>
<dbReference type="OrthoDB" id="9788285at2"/>
<dbReference type="PhylomeDB" id="Q3IYD8"/>
<dbReference type="Proteomes" id="UP000002703">
    <property type="component" value="Chromosome 1"/>
</dbReference>
<dbReference type="GO" id="GO:0005886">
    <property type="term" value="C:plasma membrane"/>
    <property type="evidence" value="ECO:0007669"/>
    <property type="project" value="UniProtKB-SubCell"/>
</dbReference>
<dbReference type="GO" id="GO:0005524">
    <property type="term" value="F:ATP binding"/>
    <property type="evidence" value="ECO:0007669"/>
    <property type="project" value="UniProtKB-UniRule"/>
</dbReference>
<dbReference type="GO" id="GO:0008556">
    <property type="term" value="F:P-type potassium transmembrane transporter activity"/>
    <property type="evidence" value="ECO:0007669"/>
    <property type="project" value="InterPro"/>
</dbReference>
<dbReference type="HAMAP" id="MF_00276">
    <property type="entry name" value="KdpC"/>
    <property type="match status" value="1"/>
</dbReference>
<dbReference type="InterPro" id="IPR003820">
    <property type="entry name" value="KdpC"/>
</dbReference>
<dbReference type="NCBIfam" id="TIGR00681">
    <property type="entry name" value="kdpC"/>
    <property type="match status" value="1"/>
</dbReference>
<dbReference type="NCBIfam" id="NF001454">
    <property type="entry name" value="PRK00315.1"/>
    <property type="match status" value="1"/>
</dbReference>
<dbReference type="PANTHER" id="PTHR30042">
    <property type="entry name" value="POTASSIUM-TRANSPORTING ATPASE C CHAIN"/>
    <property type="match status" value="1"/>
</dbReference>
<dbReference type="PANTHER" id="PTHR30042:SF2">
    <property type="entry name" value="POTASSIUM-TRANSPORTING ATPASE KDPC SUBUNIT"/>
    <property type="match status" value="1"/>
</dbReference>
<dbReference type="Pfam" id="PF02669">
    <property type="entry name" value="KdpC"/>
    <property type="match status" value="1"/>
</dbReference>
<dbReference type="PIRSF" id="PIRSF001296">
    <property type="entry name" value="K_ATPase_KdpC"/>
    <property type="match status" value="1"/>
</dbReference>
<name>KDPC_CERS4</name>
<comment type="function">
    <text evidence="1">Part of the high-affinity ATP-driven potassium transport (or Kdp) system, which catalyzes the hydrolysis of ATP coupled with the electrogenic transport of potassium into the cytoplasm. This subunit acts as a catalytic chaperone that increases the ATP-binding affinity of the ATP-hydrolyzing subunit KdpB by the formation of a transient KdpB/KdpC/ATP ternary complex.</text>
</comment>
<comment type="subunit">
    <text evidence="1">The system is composed of three essential subunits: KdpA, KdpB and KdpC.</text>
</comment>
<comment type="subcellular location">
    <subcellularLocation>
        <location evidence="1">Cell inner membrane</location>
        <topology evidence="1">Single-pass membrane protein</topology>
    </subcellularLocation>
</comment>
<comment type="similarity">
    <text evidence="1">Belongs to the KdpC family.</text>
</comment>
<feature type="chain" id="PRO_1000022311" description="Potassium-transporting ATPase KdpC subunit">
    <location>
        <begin position="1"/>
        <end position="185"/>
    </location>
</feature>
<feature type="transmembrane region" description="Helical" evidence="1">
    <location>
        <begin position="14"/>
        <end position="34"/>
    </location>
</feature>
<evidence type="ECO:0000255" key="1">
    <source>
        <dbReference type="HAMAP-Rule" id="MF_00276"/>
    </source>
</evidence>
<organism>
    <name type="scientific">Cereibacter sphaeroides (strain ATCC 17023 / DSM 158 / JCM 6121 / CCUG 31486 / LMG 2827 / NBRC 12203 / NCIMB 8253 / ATH 2.4.1.)</name>
    <name type="common">Rhodobacter sphaeroides</name>
    <dbReference type="NCBI Taxonomy" id="272943"/>
    <lineage>
        <taxon>Bacteria</taxon>
        <taxon>Pseudomonadati</taxon>
        <taxon>Pseudomonadota</taxon>
        <taxon>Alphaproteobacteria</taxon>
        <taxon>Rhodobacterales</taxon>
        <taxon>Paracoccaceae</taxon>
        <taxon>Cereibacter</taxon>
    </lineage>
</organism>
<gene>
    <name evidence="1" type="primary">kdpC</name>
    <name type="ordered locus">RHOS4_28780</name>
    <name type="ORF">RSP_1267</name>
</gene>
<reference key="1">
    <citation type="submission" date="2005-09" db="EMBL/GenBank/DDBJ databases">
        <title>Complete sequence of chromosome 1 of Rhodobacter sphaeroides 2.4.1.</title>
        <authorList>
            <person name="Copeland A."/>
            <person name="Lucas S."/>
            <person name="Lapidus A."/>
            <person name="Barry K."/>
            <person name="Detter J.C."/>
            <person name="Glavina T."/>
            <person name="Hammon N."/>
            <person name="Israni S."/>
            <person name="Pitluck S."/>
            <person name="Richardson P."/>
            <person name="Mackenzie C."/>
            <person name="Choudhary M."/>
            <person name="Larimer F."/>
            <person name="Hauser L.J."/>
            <person name="Land M."/>
            <person name="Donohue T.J."/>
            <person name="Kaplan S."/>
        </authorList>
    </citation>
    <scope>NUCLEOTIDE SEQUENCE [LARGE SCALE GENOMIC DNA]</scope>
    <source>
        <strain>ATCC 17023 / DSM 158 / JCM 6121 / CCUG 31486 / LMG 2827 / NBRC 12203 / NCIMB 8253 / ATH 2.4.1.</strain>
    </source>
</reference>
<sequence>MMTHLRPALASLLALSLLTGVAYPLALTGIAAVIAPDRAAGSLILREGQVVGSALIGQGFDGPGYLHPRPSASDWNAAGTFASNLGPTSAALLAEVQERQAAYEARNGASAPVDAVTASGSGLDPHVSPANARAQAARIARARGLDEAAVRRLIEAHVEPPLLGLWGQARVDVLAVNLALDAAGA</sequence>